<protein>
    <recommendedName>
        <fullName evidence="1">ATP-dependent Clp protease ATP-binding subunit ClpX</fullName>
    </recommendedName>
</protein>
<feature type="chain" id="PRO_1000123858" description="ATP-dependent Clp protease ATP-binding subunit ClpX">
    <location>
        <begin position="1"/>
        <end position="425"/>
    </location>
</feature>
<feature type="domain" description="ClpX-type ZB" evidence="2">
    <location>
        <begin position="5"/>
        <end position="58"/>
    </location>
</feature>
<feature type="binding site" evidence="2">
    <location>
        <position position="17"/>
    </location>
    <ligand>
        <name>Zn(2+)</name>
        <dbReference type="ChEBI" id="CHEBI:29105"/>
    </ligand>
</feature>
<feature type="binding site" evidence="2">
    <location>
        <position position="20"/>
    </location>
    <ligand>
        <name>Zn(2+)</name>
        <dbReference type="ChEBI" id="CHEBI:29105"/>
    </ligand>
</feature>
<feature type="binding site" evidence="2">
    <location>
        <position position="39"/>
    </location>
    <ligand>
        <name>Zn(2+)</name>
        <dbReference type="ChEBI" id="CHEBI:29105"/>
    </ligand>
</feature>
<feature type="binding site" evidence="2">
    <location>
        <position position="42"/>
    </location>
    <ligand>
        <name>Zn(2+)</name>
        <dbReference type="ChEBI" id="CHEBI:29105"/>
    </ligand>
</feature>
<feature type="binding site" evidence="1">
    <location>
        <begin position="121"/>
        <end position="128"/>
    </location>
    <ligand>
        <name>ATP</name>
        <dbReference type="ChEBI" id="CHEBI:30616"/>
    </ligand>
</feature>
<keyword id="KW-0067">ATP-binding</keyword>
<keyword id="KW-0143">Chaperone</keyword>
<keyword id="KW-0479">Metal-binding</keyword>
<keyword id="KW-0547">Nucleotide-binding</keyword>
<keyword id="KW-1185">Reference proteome</keyword>
<keyword id="KW-0862">Zinc</keyword>
<proteinExistence type="inferred from homology"/>
<organism>
    <name type="scientific">Thioalkalivibrio sulfidiphilus (strain HL-EbGR7)</name>
    <dbReference type="NCBI Taxonomy" id="396588"/>
    <lineage>
        <taxon>Bacteria</taxon>
        <taxon>Pseudomonadati</taxon>
        <taxon>Pseudomonadota</taxon>
        <taxon>Gammaproteobacteria</taxon>
        <taxon>Chromatiales</taxon>
        <taxon>Ectothiorhodospiraceae</taxon>
        <taxon>Thioalkalivibrio</taxon>
    </lineage>
</organism>
<accession>B8GNT9</accession>
<comment type="function">
    <text evidence="1">ATP-dependent specificity component of the Clp protease. It directs the protease to specific substrates. Can perform chaperone functions in the absence of ClpP.</text>
</comment>
<comment type="subunit">
    <text evidence="1">Component of the ClpX-ClpP complex. Forms a hexameric ring that, in the presence of ATP, binds to fourteen ClpP subunits assembled into a disk-like structure with a central cavity, resembling the structure of eukaryotic proteasomes.</text>
</comment>
<comment type="similarity">
    <text evidence="1">Belongs to the ClpX chaperone family.</text>
</comment>
<sequence>MSDNKMKDSDSGKLLYCSFCGKSQHEVRKLIAGPSVFICDECVELCNDIIREEMQEQGAAVGDKLPKPHEIKKILDEYVIGQDRAKKILAVAVYNHYKRLEARNSKDEVELAKSNILLIGPTGSGKTLLAETLARLLNVPFTIADATTLTEAGYVGEDVENIIQKLLQKCDYDVEKAQTGIVYIDEIDKISRKADNPSITRDVSGEGVQQALLKLIEGTIASVPPQGGRKHPQQEFLQVDTHNILFIVGGAFAGLDKVIRDRTEKGGIGFSAKVKSKEEKGPVSRTLSGVEPEDLIKYGLIPEFVGRLPVVATLEELDEDALIQILTEPKNALTKQYGKLFEMEGVDIEFREDALRAVAAKAMERKTGARGLRTILEQVLLDTMYDLPSTENVSKVVIDDAVIRGEAKPYLIYENSDYQKAAASD</sequence>
<reference key="1">
    <citation type="journal article" date="2011" name="Stand. Genomic Sci.">
        <title>Complete genome sequence of 'Thioalkalivibrio sulfidophilus' HL-EbGr7.</title>
        <authorList>
            <person name="Muyzer G."/>
            <person name="Sorokin D.Y."/>
            <person name="Mavromatis K."/>
            <person name="Lapidus A."/>
            <person name="Clum A."/>
            <person name="Ivanova N."/>
            <person name="Pati A."/>
            <person name="d'Haeseleer P."/>
            <person name="Woyke T."/>
            <person name="Kyrpides N.C."/>
        </authorList>
    </citation>
    <scope>NUCLEOTIDE SEQUENCE [LARGE SCALE GENOMIC DNA]</scope>
    <source>
        <strain>HL-EbGR7</strain>
    </source>
</reference>
<name>CLPX_THISH</name>
<evidence type="ECO:0000255" key="1">
    <source>
        <dbReference type="HAMAP-Rule" id="MF_00175"/>
    </source>
</evidence>
<evidence type="ECO:0000255" key="2">
    <source>
        <dbReference type="PROSITE-ProRule" id="PRU01250"/>
    </source>
</evidence>
<dbReference type="EMBL" id="CP001339">
    <property type="protein sequence ID" value="ACL72028.1"/>
    <property type="molecule type" value="Genomic_DNA"/>
</dbReference>
<dbReference type="RefSeq" id="WP_012637513.1">
    <property type="nucleotide sequence ID" value="NC_011901.1"/>
</dbReference>
<dbReference type="SMR" id="B8GNT9"/>
<dbReference type="STRING" id="396588.Tgr7_0940"/>
<dbReference type="KEGG" id="tgr:Tgr7_0940"/>
<dbReference type="eggNOG" id="COG1219">
    <property type="taxonomic scope" value="Bacteria"/>
</dbReference>
<dbReference type="HOGENOM" id="CLU_014218_8_2_6"/>
<dbReference type="OrthoDB" id="9804062at2"/>
<dbReference type="Proteomes" id="UP000002383">
    <property type="component" value="Chromosome"/>
</dbReference>
<dbReference type="GO" id="GO:0009376">
    <property type="term" value="C:HslUV protease complex"/>
    <property type="evidence" value="ECO:0007669"/>
    <property type="project" value="TreeGrafter"/>
</dbReference>
<dbReference type="GO" id="GO:0005524">
    <property type="term" value="F:ATP binding"/>
    <property type="evidence" value="ECO:0007669"/>
    <property type="project" value="UniProtKB-UniRule"/>
</dbReference>
<dbReference type="GO" id="GO:0016887">
    <property type="term" value="F:ATP hydrolysis activity"/>
    <property type="evidence" value="ECO:0007669"/>
    <property type="project" value="InterPro"/>
</dbReference>
<dbReference type="GO" id="GO:0140662">
    <property type="term" value="F:ATP-dependent protein folding chaperone"/>
    <property type="evidence" value="ECO:0007669"/>
    <property type="project" value="InterPro"/>
</dbReference>
<dbReference type="GO" id="GO:0046983">
    <property type="term" value="F:protein dimerization activity"/>
    <property type="evidence" value="ECO:0007669"/>
    <property type="project" value="InterPro"/>
</dbReference>
<dbReference type="GO" id="GO:0051082">
    <property type="term" value="F:unfolded protein binding"/>
    <property type="evidence" value="ECO:0007669"/>
    <property type="project" value="UniProtKB-UniRule"/>
</dbReference>
<dbReference type="GO" id="GO:0008270">
    <property type="term" value="F:zinc ion binding"/>
    <property type="evidence" value="ECO:0007669"/>
    <property type="project" value="InterPro"/>
</dbReference>
<dbReference type="GO" id="GO:0051301">
    <property type="term" value="P:cell division"/>
    <property type="evidence" value="ECO:0007669"/>
    <property type="project" value="TreeGrafter"/>
</dbReference>
<dbReference type="GO" id="GO:0051603">
    <property type="term" value="P:proteolysis involved in protein catabolic process"/>
    <property type="evidence" value="ECO:0007669"/>
    <property type="project" value="TreeGrafter"/>
</dbReference>
<dbReference type="CDD" id="cd19497">
    <property type="entry name" value="RecA-like_ClpX"/>
    <property type="match status" value="1"/>
</dbReference>
<dbReference type="FunFam" id="1.10.8.60:FF:000002">
    <property type="entry name" value="ATP-dependent Clp protease ATP-binding subunit ClpX"/>
    <property type="match status" value="1"/>
</dbReference>
<dbReference type="FunFam" id="3.40.50.300:FF:000005">
    <property type="entry name" value="ATP-dependent Clp protease ATP-binding subunit ClpX"/>
    <property type="match status" value="1"/>
</dbReference>
<dbReference type="Gene3D" id="1.10.8.60">
    <property type="match status" value="1"/>
</dbReference>
<dbReference type="Gene3D" id="6.20.220.10">
    <property type="entry name" value="ClpX chaperone, C4-type zinc finger domain"/>
    <property type="match status" value="1"/>
</dbReference>
<dbReference type="Gene3D" id="3.40.50.300">
    <property type="entry name" value="P-loop containing nucleotide triphosphate hydrolases"/>
    <property type="match status" value="1"/>
</dbReference>
<dbReference type="HAMAP" id="MF_00175">
    <property type="entry name" value="ClpX"/>
    <property type="match status" value="1"/>
</dbReference>
<dbReference type="InterPro" id="IPR003593">
    <property type="entry name" value="AAA+_ATPase"/>
</dbReference>
<dbReference type="InterPro" id="IPR050052">
    <property type="entry name" value="ATP-dep_Clp_protease_ClpX"/>
</dbReference>
<dbReference type="InterPro" id="IPR003959">
    <property type="entry name" value="ATPase_AAA_core"/>
</dbReference>
<dbReference type="InterPro" id="IPR019489">
    <property type="entry name" value="Clp_ATPase_C"/>
</dbReference>
<dbReference type="InterPro" id="IPR004487">
    <property type="entry name" value="Clp_protease_ATP-bd_su_ClpX"/>
</dbReference>
<dbReference type="InterPro" id="IPR046425">
    <property type="entry name" value="ClpX_bact"/>
</dbReference>
<dbReference type="InterPro" id="IPR027417">
    <property type="entry name" value="P-loop_NTPase"/>
</dbReference>
<dbReference type="InterPro" id="IPR010603">
    <property type="entry name" value="Znf_CppX_C4"/>
</dbReference>
<dbReference type="InterPro" id="IPR038366">
    <property type="entry name" value="Znf_CppX_C4_sf"/>
</dbReference>
<dbReference type="NCBIfam" id="TIGR00382">
    <property type="entry name" value="clpX"/>
    <property type="match status" value="1"/>
</dbReference>
<dbReference type="NCBIfam" id="NF003745">
    <property type="entry name" value="PRK05342.1"/>
    <property type="match status" value="1"/>
</dbReference>
<dbReference type="PANTHER" id="PTHR48102:SF7">
    <property type="entry name" value="ATP-DEPENDENT CLP PROTEASE ATP-BINDING SUBUNIT CLPX-LIKE, MITOCHONDRIAL"/>
    <property type="match status" value="1"/>
</dbReference>
<dbReference type="PANTHER" id="PTHR48102">
    <property type="entry name" value="ATP-DEPENDENT CLP PROTEASE ATP-BINDING SUBUNIT CLPX-LIKE, MITOCHONDRIAL-RELATED"/>
    <property type="match status" value="1"/>
</dbReference>
<dbReference type="Pfam" id="PF07724">
    <property type="entry name" value="AAA_2"/>
    <property type="match status" value="1"/>
</dbReference>
<dbReference type="Pfam" id="PF10431">
    <property type="entry name" value="ClpB_D2-small"/>
    <property type="match status" value="1"/>
</dbReference>
<dbReference type="Pfam" id="PF06689">
    <property type="entry name" value="zf-C4_ClpX"/>
    <property type="match status" value="1"/>
</dbReference>
<dbReference type="SMART" id="SM00382">
    <property type="entry name" value="AAA"/>
    <property type="match status" value="1"/>
</dbReference>
<dbReference type="SMART" id="SM01086">
    <property type="entry name" value="ClpB_D2-small"/>
    <property type="match status" value="1"/>
</dbReference>
<dbReference type="SMART" id="SM00994">
    <property type="entry name" value="zf-C4_ClpX"/>
    <property type="match status" value="1"/>
</dbReference>
<dbReference type="SUPFAM" id="SSF57716">
    <property type="entry name" value="Glucocorticoid receptor-like (DNA-binding domain)"/>
    <property type="match status" value="1"/>
</dbReference>
<dbReference type="SUPFAM" id="SSF52540">
    <property type="entry name" value="P-loop containing nucleoside triphosphate hydrolases"/>
    <property type="match status" value="1"/>
</dbReference>
<dbReference type="PROSITE" id="PS51902">
    <property type="entry name" value="CLPX_ZB"/>
    <property type="match status" value="1"/>
</dbReference>
<gene>
    <name evidence="1" type="primary">clpX</name>
    <name type="ordered locus">Tgr7_0940</name>
</gene>